<gene>
    <name evidence="3" type="primary">nadD</name>
    <name type="ordered locus">MT2494</name>
</gene>
<sequence length="214" mass="23340">MGVMGGTFDPIHYGHLVAASEVADLFDLDEVVFVPSGQPWQKGRQVSAAEHRYLMTVIATASNPRFSVSRVDIDRGGPTYTKDTLADLHALHPDSELYFTTGADALASIMSWQGWEELFELARFVGVSRPGYELRNEHITSLLGQLAKDALTLVEIPALAISSTDCRQRAEQSRPLWYLMPDGVVQYVSKCRLYCGACDAGARSTTSLAAGNGL</sequence>
<feature type="chain" id="PRO_0000427819" description="Probable nicotinate-nucleotide adenylyltransferase">
    <location>
        <begin position="1"/>
        <end position="214"/>
    </location>
</feature>
<organism>
    <name type="scientific">Mycobacterium tuberculosis (strain CDC 1551 / Oshkosh)</name>
    <dbReference type="NCBI Taxonomy" id="83331"/>
    <lineage>
        <taxon>Bacteria</taxon>
        <taxon>Bacillati</taxon>
        <taxon>Actinomycetota</taxon>
        <taxon>Actinomycetes</taxon>
        <taxon>Mycobacteriales</taxon>
        <taxon>Mycobacteriaceae</taxon>
        <taxon>Mycobacterium</taxon>
        <taxon>Mycobacterium tuberculosis complex</taxon>
    </lineage>
</organism>
<accession>P9WJJ4</accession>
<accession>L0TCA5</accession>
<accession>O86328</accession>
<dbReference type="EC" id="2.7.7.18" evidence="3"/>
<dbReference type="EMBL" id="AE000516">
    <property type="protein sequence ID" value="AAK46791.1"/>
    <property type="status" value="ALT_INIT"/>
    <property type="molecule type" value="Genomic_DNA"/>
</dbReference>
<dbReference type="PIR" id="H70685">
    <property type="entry name" value="H70685"/>
</dbReference>
<dbReference type="SMR" id="P9WJJ4"/>
<dbReference type="KEGG" id="mtc:MT2494"/>
<dbReference type="PATRIC" id="fig|83331.31.peg.2689"/>
<dbReference type="HOGENOM" id="CLU_069765_1_1_11"/>
<dbReference type="UniPathway" id="UPA00253">
    <property type="reaction ID" value="UER00332"/>
</dbReference>
<dbReference type="Proteomes" id="UP000001020">
    <property type="component" value="Chromosome"/>
</dbReference>
<dbReference type="GO" id="GO:0005524">
    <property type="term" value="F:ATP binding"/>
    <property type="evidence" value="ECO:0007669"/>
    <property type="project" value="UniProtKB-KW"/>
</dbReference>
<dbReference type="GO" id="GO:0004515">
    <property type="term" value="F:nicotinate-nucleotide adenylyltransferase activity"/>
    <property type="evidence" value="ECO:0007669"/>
    <property type="project" value="UniProtKB-UniRule"/>
</dbReference>
<dbReference type="GO" id="GO:0009435">
    <property type="term" value="P:NAD biosynthetic process"/>
    <property type="evidence" value="ECO:0007669"/>
    <property type="project" value="UniProtKB-UniRule"/>
</dbReference>
<dbReference type="CDD" id="cd02165">
    <property type="entry name" value="NMNAT"/>
    <property type="match status" value="1"/>
</dbReference>
<dbReference type="FunFam" id="3.40.50.620:FF:000039">
    <property type="entry name" value="Probable nicotinate-nucleotide adenylyltransferase"/>
    <property type="match status" value="1"/>
</dbReference>
<dbReference type="Gene3D" id="3.40.50.620">
    <property type="entry name" value="HUPs"/>
    <property type="match status" value="1"/>
</dbReference>
<dbReference type="HAMAP" id="MF_00244">
    <property type="entry name" value="NaMN_adenylyltr"/>
    <property type="match status" value="1"/>
</dbReference>
<dbReference type="InterPro" id="IPR004821">
    <property type="entry name" value="Cyt_trans-like"/>
</dbReference>
<dbReference type="InterPro" id="IPR005248">
    <property type="entry name" value="NadD/NMNAT"/>
</dbReference>
<dbReference type="InterPro" id="IPR014729">
    <property type="entry name" value="Rossmann-like_a/b/a_fold"/>
</dbReference>
<dbReference type="NCBIfam" id="TIGR00125">
    <property type="entry name" value="cyt_tran_rel"/>
    <property type="match status" value="1"/>
</dbReference>
<dbReference type="NCBIfam" id="TIGR00482">
    <property type="entry name" value="nicotinate (nicotinamide) nucleotide adenylyltransferase"/>
    <property type="match status" value="1"/>
</dbReference>
<dbReference type="NCBIfam" id="NF000840">
    <property type="entry name" value="PRK00071.1-3"/>
    <property type="match status" value="1"/>
</dbReference>
<dbReference type="PANTHER" id="PTHR39321">
    <property type="entry name" value="NICOTINATE-NUCLEOTIDE ADENYLYLTRANSFERASE-RELATED"/>
    <property type="match status" value="1"/>
</dbReference>
<dbReference type="PANTHER" id="PTHR39321:SF3">
    <property type="entry name" value="PHOSPHOPANTETHEINE ADENYLYLTRANSFERASE"/>
    <property type="match status" value="1"/>
</dbReference>
<dbReference type="Pfam" id="PF01467">
    <property type="entry name" value="CTP_transf_like"/>
    <property type="match status" value="1"/>
</dbReference>
<dbReference type="SUPFAM" id="SSF52374">
    <property type="entry name" value="Nucleotidylyl transferase"/>
    <property type="match status" value="1"/>
</dbReference>
<comment type="function">
    <text evidence="1 3">Catalyzes the reversible adenylation of nicotinate mononucleotide (NaMN) to nicotinic acid adenine dinucleotide (NaAD).</text>
</comment>
<comment type="catalytic activity">
    <reaction evidence="3">
        <text>nicotinate beta-D-ribonucleotide + ATP + H(+) = deamido-NAD(+) + diphosphate</text>
        <dbReference type="Rhea" id="RHEA:22860"/>
        <dbReference type="ChEBI" id="CHEBI:15378"/>
        <dbReference type="ChEBI" id="CHEBI:30616"/>
        <dbReference type="ChEBI" id="CHEBI:33019"/>
        <dbReference type="ChEBI" id="CHEBI:57502"/>
        <dbReference type="ChEBI" id="CHEBI:58437"/>
        <dbReference type="EC" id="2.7.7.18"/>
    </reaction>
</comment>
<comment type="pathway">
    <text evidence="3">Cofactor biosynthesis; NAD(+) biosynthesis; deamido-NAD(+) from nicotinate D-ribonucleotide: step 1/1.</text>
</comment>
<comment type="similarity">
    <text evidence="3 4">Belongs to the NadD family.</text>
</comment>
<comment type="sequence caution" evidence="2">
    <conflict type="erroneous initiation">
        <sequence resource="EMBL-CDS" id="AAK46791"/>
    </conflict>
    <text>Truncated N-terminus.</text>
</comment>
<evidence type="ECO:0000250" key="1"/>
<evidence type="ECO:0000250" key="2">
    <source>
        <dbReference type="UniProtKB" id="P9WJJ5"/>
    </source>
</evidence>
<evidence type="ECO:0000255" key="3">
    <source>
        <dbReference type="HAMAP-Rule" id="MF_00244"/>
    </source>
</evidence>
<evidence type="ECO:0000305" key="4"/>
<reference key="1">
    <citation type="journal article" date="2002" name="J. Bacteriol.">
        <title>Whole-genome comparison of Mycobacterium tuberculosis clinical and laboratory strains.</title>
        <authorList>
            <person name="Fleischmann R.D."/>
            <person name="Alland D."/>
            <person name="Eisen J.A."/>
            <person name="Carpenter L."/>
            <person name="White O."/>
            <person name="Peterson J.D."/>
            <person name="DeBoy R.T."/>
            <person name="Dodson R.J."/>
            <person name="Gwinn M.L."/>
            <person name="Haft D.H."/>
            <person name="Hickey E.K."/>
            <person name="Kolonay J.F."/>
            <person name="Nelson W.C."/>
            <person name="Umayam L.A."/>
            <person name="Ermolaeva M.D."/>
            <person name="Salzberg S.L."/>
            <person name="Delcher A."/>
            <person name="Utterback T.R."/>
            <person name="Weidman J.F."/>
            <person name="Khouri H.M."/>
            <person name="Gill J."/>
            <person name="Mikula A."/>
            <person name="Bishai W."/>
            <person name="Jacobs W.R. Jr."/>
            <person name="Venter J.C."/>
            <person name="Fraser C.M."/>
        </authorList>
    </citation>
    <scope>NUCLEOTIDE SEQUENCE [LARGE SCALE GENOMIC DNA]</scope>
    <source>
        <strain>CDC 1551 / Oshkosh</strain>
    </source>
</reference>
<name>NADD_MYCTO</name>
<proteinExistence type="inferred from homology"/>
<protein>
    <recommendedName>
        <fullName evidence="3">Probable nicotinate-nucleotide adenylyltransferase</fullName>
        <ecNumber evidence="3">2.7.7.18</ecNumber>
    </recommendedName>
    <alternativeName>
        <fullName evidence="3">Deamido-NAD(+) diphosphorylase</fullName>
    </alternativeName>
    <alternativeName>
        <fullName evidence="3">Deamido-NAD(+) pyrophosphorylase</fullName>
    </alternativeName>
    <alternativeName>
        <fullName evidence="3">Nicotinate mononucleotide adenylyltransferase</fullName>
        <shortName evidence="3">NaMN adenylyltransferase</shortName>
    </alternativeName>
</protein>
<keyword id="KW-0067">ATP-binding</keyword>
<keyword id="KW-0520">NAD</keyword>
<keyword id="KW-0547">Nucleotide-binding</keyword>
<keyword id="KW-0548">Nucleotidyltransferase</keyword>
<keyword id="KW-0662">Pyridine nucleotide biosynthesis</keyword>
<keyword id="KW-1185">Reference proteome</keyword>
<keyword id="KW-0808">Transferase</keyword>